<sequence length="84" mass="9311">MKTLLLTLVVVTIVCLDLGNSLICYNTMMQKVTCPEGKDKCEKYAVPVMRGKFYFSYQCTSKCHEGAYDVCCSTDLCNKSSTSG</sequence>
<evidence type="ECO:0000250" key="1">
    <source>
        <dbReference type="UniProtKB" id="P60301"/>
    </source>
</evidence>
<evidence type="ECO:0000255" key="2"/>
<evidence type="ECO:0000269" key="3">
    <source>
    </source>
</evidence>
<evidence type="ECO:0000305" key="4"/>
<evidence type="ECO:0000305" key="5">
    <source>
    </source>
</evidence>
<proteinExistence type="evidence at protein level"/>
<accession>C6JUP1</accession>
<dbReference type="EMBL" id="GQ139601">
    <property type="protein sequence ID" value="ACS74995.1"/>
    <property type="molecule type" value="mRNA"/>
</dbReference>
<dbReference type="SMR" id="C6JUP1"/>
<dbReference type="GO" id="GO:0005576">
    <property type="term" value="C:extracellular region"/>
    <property type="evidence" value="ECO:0007669"/>
    <property type="project" value="UniProtKB-SubCell"/>
</dbReference>
<dbReference type="GO" id="GO:0090729">
    <property type="term" value="F:toxin activity"/>
    <property type="evidence" value="ECO:0007669"/>
    <property type="project" value="UniProtKB-KW"/>
</dbReference>
<dbReference type="Gene3D" id="2.10.60.10">
    <property type="entry name" value="CD59"/>
    <property type="match status" value="1"/>
</dbReference>
<dbReference type="InterPro" id="IPR045860">
    <property type="entry name" value="Snake_toxin-like_sf"/>
</dbReference>
<dbReference type="SUPFAM" id="SSF57302">
    <property type="entry name" value="Snake toxin-like"/>
    <property type="match status" value="1"/>
</dbReference>
<reference key="1">
    <citation type="journal article" date="2009" name="BMC Genomics">
        <title>Transcriptomic basis for an antiserum against Micrurus corallinus (coral snake) venom.</title>
        <authorList>
            <person name="Leao L.I."/>
            <person name="Ho P.L."/>
            <person name="Junqueira-de-Azevedo I.L.M."/>
        </authorList>
    </citation>
    <scope>NUCLEOTIDE SEQUENCE [MRNA]</scope>
    <source>
        <tissue>Venom gland</tissue>
    </source>
</reference>
<reference key="2">
    <citation type="journal article" date="2011" name="J. Proteomics">
        <title>Snake venomics and venom gland transcriptomic analysis of Brazilian coral snakes, Micrurus altirostris and M. corallinus.</title>
        <authorList>
            <person name="Correa-Netto C."/>
            <person name="Junqueira-de-Azevedo Ide L."/>
            <person name="Silva D.A."/>
            <person name="Ho P.L."/>
            <person name="Leitao-de-Araujo M."/>
            <person name="Alves M.L."/>
            <person name="Sanz L."/>
            <person name="Foguel D."/>
            <person name="Zingali R.B."/>
            <person name="Calvete J.J."/>
        </authorList>
    </citation>
    <scope>PROTEIN SEQUENCE OF 22-36</scope>
    <scope>IDENTIFICATION BY MASS SPECTROMETRY</scope>
    <scope>SUBCELLULAR LOCATION</scope>
    <source>
        <tissue>Venom</tissue>
    </source>
</reference>
<keyword id="KW-0903">Direct protein sequencing</keyword>
<keyword id="KW-1015">Disulfide bond</keyword>
<keyword id="KW-0325">Glycoprotein</keyword>
<keyword id="KW-0964">Secreted</keyword>
<keyword id="KW-0732">Signal</keyword>
<keyword id="KW-0800">Toxin</keyword>
<comment type="subcellular location">
    <subcellularLocation>
        <location evidence="3">Secreted</location>
    </subcellularLocation>
</comment>
<comment type="tissue specificity">
    <text evidence="4">Expressed by the venom gland.</text>
</comment>
<comment type="similarity">
    <text evidence="4">Belongs to the three-finger toxin family. Short-chain subfamily.</text>
</comment>
<feature type="signal peptide" evidence="3">
    <location>
        <begin position="1"/>
        <end position="21"/>
    </location>
</feature>
<feature type="chain" id="PRO_0000422892" description="Three-finger toxin 3FTx-1" evidence="5">
    <location>
        <begin position="22"/>
        <end position="84"/>
    </location>
</feature>
<feature type="glycosylation site" description="N-linked (GlcNAc...) asparagine" evidence="2">
    <location>
        <position position="78"/>
    </location>
</feature>
<feature type="disulfide bond" evidence="1">
    <location>
        <begin position="24"/>
        <end position="41"/>
    </location>
</feature>
<feature type="disulfide bond" evidence="1">
    <location>
        <begin position="34"/>
        <end position="59"/>
    </location>
</feature>
<feature type="disulfide bond" evidence="1">
    <location>
        <begin position="63"/>
        <end position="71"/>
    </location>
</feature>
<feature type="disulfide bond" evidence="1">
    <location>
        <begin position="72"/>
        <end position="77"/>
    </location>
</feature>
<name>3SX1_MICCO</name>
<protein>
    <recommendedName>
        <fullName>Three-finger toxin 3FTx-1</fullName>
    </recommendedName>
</protein>
<organism>
    <name type="scientific">Micrurus corallinus</name>
    <name type="common">Brazilian coral snake</name>
    <dbReference type="NCBI Taxonomy" id="54390"/>
    <lineage>
        <taxon>Eukaryota</taxon>
        <taxon>Metazoa</taxon>
        <taxon>Chordata</taxon>
        <taxon>Craniata</taxon>
        <taxon>Vertebrata</taxon>
        <taxon>Euteleostomi</taxon>
        <taxon>Lepidosauria</taxon>
        <taxon>Squamata</taxon>
        <taxon>Bifurcata</taxon>
        <taxon>Unidentata</taxon>
        <taxon>Episquamata</taxon>
        <taxon>Toxicofera</taxon>
        <taxon>Serpentes</taxon>
        <taxon>Colubroidea</taxon>
        <taxon>Elapidae</taxon>
        <taxon>Elapinae</taxon>
        <taxon>Micrurus</taxon>
    </lineage>
</organism>